<keyword id="KW-0067">ATP-binding</keyword>
<keyword id="KW-0963">Cytoplasm</keyword>
<keyword id="KW-1015">Disulfide bond</keyword>
<keyword id="KW-0547">Nucleotide-binding</keyword>
<keyword id="KW-0676">Redox-active center</keyword>
<keyword id="KW-1185">Reference proteome</keyword>
<keyword id="KW-0694">RNA-binding</keyword>
<keyword id="KW-0784">Thiamine biosynthesis</keyword>
<keyword id="KW-0808">Transferase</keyword>
<keyword id="KW-0820">tRNA-binding</keyword>
<evidence type="ECO:0000255" key="1">
    <source>
        <dbReference type="HAMAP-Rule" id="MF_00021"/>
    </source>
</evidence>
<sequence>MKFIIKLFPEITIKSQSVRLRFIKILTGNIRNVLKHYDETLAVVRHWDNIEVRAKDENQRLAIRDALTRIPGIHHILEVEDVPFTDMHDIFEKALVQYRDQLEGKTFCVRVKRRGKHDFSSIDVERYVGGGLNQHIESARVKLTNPEVTVHLEVEDDRLLLIKGRYEGIGGFPIGTQEDVLSLISGGFDSGVSSYMLMRRGCRVHYCFFNLGGAAHEIGVRQVAHYLWNRFGSSHRVRFVAINFEPVVGEILEKIDDGQMGVILKRMMVRAASKVAERYGVQALVTGEALGQVSSQTLTNLRLIDNVSDTLILRPLISYDKEHIINLARQIGTEDFARTMPEYCGVISKSPTVKAVKSKIEAEEEKFDFSILDKVVEEANNVDIREIAQQTEQEVVEVETVNGFGPNDVILDIRSIDEQEDKPLKVEGIDVVSLPFYKLSTKFGDLDQSKTWLLWCERGVMSRLQALYLREQGFNNVKVYRP</sequence>
<organism>
    <name type="scientific">Escherichia coli O45:K1 (strain S88 / ExPEC)</name>
    <dbReference type="NCBI Taxonomy" id="585035"/>
    <lineage>
        <taxon>Bacteria</taxon>
        <taxon>Pseudomonadati</taxon>
        <taxon>Pseudomonadota</taxon>
        <taxon>Gammaproteobacteria</taxon>
        <taxon>Enterobacterales</taxon>
        <taxon>Enterobacteriaceae</taxon>
        <taxon>Escherichia</taxon>
    </lineage>
</organism>
<dbReference type="EC" id="2.8.1.4" evidence="1"/>
<dbReference type="EMBL" id="CU928161">
    <property type="protein sequence ID" value="CAR01766.1"/>
    <property type="molecule type" value="Genomic_DNA"/>
</dbReference>
<dbReference type="RefSeq" id="WP_000668687.1">
    <property type="nucleotide sequence ID" value="NC_011742.1"/>
</dbReference>
<dbReference type="SMR" id="B7MD81"/>
<dbReference type="KEGG" id="ecz:ECS88_0419"/>
<dbReference type="HOGENOM" id="CLU_037952_4_1_6"/>
<dbReference type="UniPathway" id="UPA00060"/>
<dbReference type="Proteomes" id="UP000000747">
    <property type="component" value="Chromosome"/>
</dbReference>
<dbReference type="GO" id="GO:0005829">
    <property type="term" value="C:cytosol"/>
    <property type="evidence" value="ECO:0007669"/>
    <property type="project" value="TreeGrafter"/>
</dbReference>
<dbReference type="GO" id="GO:0005524">
    <property type="term" value="F:ATP binding"/>
    <property type="evidence" value="ECO:0007669"/>
    <property type="project" value="UniProtKB-UniRule"/>
</dbReference>
<dbReference type="GO" id="GO:0004810">
    <property type="term" value="F:CCA tRNA nucleotidyltransferase activity"/>
    <property type="evidence" value="ECO:0007669"/>
    <property type="project" value="InterPro"/>
</dbReference>
<dbReference type="GO" id="GO:0000049">
    <property type="term" value="F:tRNA binding"/>
    <property type="evidence" value="ECO:0007669"/>
    <property type="project" value="UniProtKB-UniRule"/>
</dbReference>
<dbReference type="GO" id="GO:0140741">
    <property type="term" value="F:tRNA-uracil-4 sulfurtransferase activity"/>
    <property type="evidence" value="ECO:0007669"/>
    <property type="project" value="UniProtKB-EC"/>
</dbReference>
<dbReference type="GO" id="GO:0009228">
    <property type="term" value="P:thiamine biosynthetic process"/>
    <property type="evidence" value="ECO:0007669"/>
    <property type="project" value="UniProtKB-KW"/>
</dbReference>
<dbReference type="GO" id="GO:0009229">
    <property type="term" value="P:thiamine diphosphate biosynthetic process"/>
    <property type="evidence" value="ECO:0007669"/>
    <property type="project" value="UniProtKB-UniRule"/>
</dbReference>
<dbReference type="GO" id="GO:0052837">
    <property type="term" value="P:thiazole biosynthetic process"/>
    <property type="evidence" value="ECO:0007669"/>
    <property type="project" value="InterPro"/>
</dbReference>
<dbReference type="GO" id="GO:0002937">
    <property type="term" value="P:tRNA 4-thiouridine biosynthesis"/>
    <property type="evidence" value="ECO:0007669"/>
    <property type="project" value="TreeGrafter"/>
</dbReference>
<dbReference type="CDD" id="cd01712">
    <property type="entry name" value="PPase_ThiI"/>
    <property type="match status" value="1"/>
</dbReference>
<dbReference type="CDD" id="cd00158">
    <property type="entry name" value="RHOD"/>
    <property type="match status" value="1"/>
</dbReference>
<dbReference type="CDD" id="cd11716">
    <property type="entry name" value="THUMP_ThiI"/>
    <property type="match status" value="1"/>
</dbReference>
<dbReference type="FunFam" id="3.30.2130.30:FF:000002">
    <property type="entry name" value="tRNA sulfurtransferase"/>
    <property type="match status" value="1"/>
</dbReference>
<dbReference type="FunFam" id="3.40.250.10:FF:000003">
    <property type="entry name" value="tRNA sulfurtransferase"/>
    <property type="match status" value="1"/>
</dbReference>
<dbReference type="FunFam" id="3.40.50.620:FF:000029">
    <property type="entry name" value="tRNA sulfurtransferase"/>
    <property type="match status" value="1"/>
</dbReference>
<dbReference type="Gene3D" id="3.30.2130.30">
    <property type="match status" value="1"/>
</dbReference>
<dbReference type="Gene3D" id="3.40.50.620">
    <property type="entry name" value="HUPs"/>
    <property type="match status" value="1"/>
</dbReference>
<dbReference type="Gene3D" id="3.40.250.10">
    <property type="entry name" value="Rhodanese-like domain"/>
    <property type="match status" value="1"/>
</dbReference>
<dbReference type="HAMAP" id="MF_00021">
    <property type="entry name" value="ThiI"/>
    <property type="match status" value="1"/>
</dbReference>
<dbReference type="InterPro" id="IPR001763">
    <property type="entry name" value="Rhodanese-like_dom"/>
</dbReference>
<dbReference type="InterPro" id="IPR036873">
    <property type="entry name" value="Rhodanese-like_dom_sf"/>
</dbReference>
<dbReference type="InterPro" id="IPR014729">
    <property type="entry name" value="Rossmann-like_a/b/a_fold"/>
</dbReference>
<dbReference type="InterPro" id="IPR020536">
    <property type="entry name" value="ThiI_AANH"/>
</dbReference>
<dbReference type="InterPro" id="IPR054173">
    <property type="entry name" value="ThiI_fer"/>
</dbReference>
<dbReference type="InterPro" id="IPR049961">
    <property type="entry name" value="ThiI_N"/>
</dbReference>
<dbReference type="InterPro" id="IPR026340">
    <property type="entry name" value="THII_Thiazole_biosynth_dom"/>
</dbReference>
<dbReference type="InterPro" id="IPR004114">
    <property type="entry name" value="THUMP_dom"/>
</dbReference>
<dbReference type="InterPro" id="IPR049962">
    <property type="entry name" value="THUMP_ThiI"/>
</dbReference>
<dbReference type="InterPro" id="IPR003720">
    <property type="entry name" value="tRNA_STrfase"/>
</dbReference>
<dbReference type="InterPro" id="IPR050102">
    <property type="entry name" value="tRNA_sulfurtransferase_ThiI"/>
</dbReference>
<dbReference type="NCBIfam" id="TIGR04271">
    <property type="entry name" value="ThiI_C_thiazole"/>
    <property type="match status" value="1"/>
</dbReference>
<dbReference type="NCBIfam" id="TIGR00342">
    <property type="entry name" value="tRNA uracil 4-sulfurtransferase ThiI"/>
    <property type="match status" value="1"/>
</dbReference>
<dbReference type="PANTHER" id="PTHR43209">
    <property type="entry name" value="TRNA SULFURTRANSFERASE"/>
    <property type="match status" value="1"/>
</dbReference>
<dbReference type="PANTHER" id="PTHR43209:SF1">
    <property type="entry name" value="TRNA SULFURTRANSFERASE"/>
    <property type="match status" value="1"/>
</dbReference>
<dbReference type="Pfam" id="PF02568">
    <property type="entry name" value="ThiI"/>
    <property type="match status" value="1"/>
</dbReference>
<dbReference type="Pfam" id="PF22025">
    <property type="entry name" value="ThiI_fer"/>
    <property type="match status" value="1"/>
</dbReference>
<dbReference type="Pfam" id="PF02926">
    <property type="entry name" value="THUMP"/>
    <property type="match status" value="1"/>
</dbReference>
<dbReference type="SMART" id="SM00981">
    <property type="entry name" value="THUMP"/>
    <property type="match status" value="1"/>
</dbReference>
<dbReference type="SUPFAM" id="SSF52402">
    <property type="entry name" value="Adenine nucleotide alpha hydrolases-like"/>
    <property type="match status" value="1"/>
</dbReference>
<dbReference type="SUPFAM" id="SSF52821">
    <property type="entry name" value="Rhodanese/Cell cycle control phosphatase"/>
    <property type="match status" value="1"/>
</dbReference>
<dbReference type="SUPFAM" id="SSF143437">
    <property type="entry name" value="THUMP domain-like"/>
    <property type="match status" value="1"/>
</dbReference>
<dbReference type="PROSITE" id="PS50206">
    <property type="entry name" value="RHODANESE_3"/>
    <property type="match status" value="1"/>
</dbReference>
<dbReference type="PROSITE" id="PS51165">
    <property type="entry name" value="THUMP"/>
    <property type="match status" value="1"/>
</dbReference>
<gene>
    <name evidence="1" type="primary">thiI</name>
    <name type="ordered locus">ECS88_0419</name>
</gene>
<name>THII_ECO45</name>
<reference key="1">
    <citation type="journal article" date="2009" name="PLoS Genet.">
        <title>Organised genome dynamics in the Escherichia coli species results in highly diverse adaptive paths.</title>
        <authorList>
            <person name="Touchon M."/>
            <person name="Hoede C."/>
            <person name="Tenaillon O."/>
            <person name="Barbe V."/>
            <person name="Baeriswyl S."/>
            <person name="Bidet P."/>
            <person name="Bingen E."/>
            <person name="Bonacorsi S."/>
            <person name="Bouchier C."/>
            <person name="Bouvet O."/>
            <person name="Calteau A."/>
            <person name="Chiapello H."/>
            <person name="Clermont O."/>
            <person name="Cruveiller S."/>
            <person name="Danchin A."/>
            <person name="Diard M."/>
            <person name="Dossat C."/>
            <person name="Karoui M.E."/>
            <person name="Frapy E."/>
            <person name="Garry L."/>
            <person name="Ghigo J.M."/>
            <person name="Gilles A.M."/>
            <person name="Johnson J."/>
            <person name="Le Bouguenec C."/>
            <person name="Lescat M."/>
            <person name="Mangenot S."/>
            <person name="Martinez-Jehanne V."/>
            <person name="Matic I."/>
            <person name="Nassif X."/>
            <person name="Oztas S."/>
            <person name="Petit M.A."/>
            <person name="Pichon C."/>
            <person name="Rouy Z."/>
            <person name="Ruf C.S."/>
            <person name="Schneider D."/>
            <person name="Tourret J."/>
            <person name="Vacherie B."/>
            <person name="Vallenet D."/>
            <person name="Medigue C."/>
            <person name="Rocha E.P.C."/>
            <person name="Denamur E."/>
        </authorList>
    </citation>
    <scope>NUCLEOTIDE SEQUENCE [LARGE SCALE GENOMIC DNA]</scope>
    <source>
        <strain>S88 / ExPEC</strain>
    </source>
</reference>
<comment type="function">
    <text evidence="1">Catalyzes the ATP-dependent transfer of a sulfur to tRNA to produce 4-thiouridine in position 8 of tRNAs, which functions as a near-UV photosensor. Also catalyzes the transfer of sulfur to the sulfur carrier protein ThiS, forming ThiS-thiocarboxylate. This is a step in the synthesis of thiazole, in the thiamine biosynthesis pathway. The sulfur is donated as persulfide by IscS.</text>
</comment>
<comment type="catalytic activity">
    <reaction evidence="1">
        <text>[ThiI sulfur-carrier protein]-S-sulfanyl-L-cysteine + a uridine in tRNA + 2 reduced [2Fe-2S]-[ferredoxin] + ATP + H(+) = [ThiI sulfur-carrier protein]-L-cysteine + a 4-thiouridine in tRNA + 2 oxidized [2Fe-2S]-[ferredoxin] + AMP + diphosphate</text>
        <dbReference type="Rhea" id="RHEA:24176"/>
        <dbReference type="Rhea" id="RHEA-COMP:10000"/>
        <dbReference type="Rhea" id="RHEA-COMP:10001"/>
        <dbReference type="Rhea" id="RHEA-COMP:13337"/>
        <dbReference type="Rhea" id="RHEA-COMP:13338"/>
        <dbReference type="Rhea" id="RHEA-COMP:13339"/>
        <dbReference type="Rhea" id="RHEA-COMP:13340"/>
        <dbReference type="ChEBI" id="CHEBI:15378"/>
        <dbReference type="ChEBI" id="CHEBI:29950"/>
        <dbReference type="ChEBI" id="CHEBI:30616"/>
        <dbReference type="ChEBI" id="CHEBI:33019"/>
        <dbReference type="ChEBI" id="CHEBI:33737"/>
        <dbReference type="ChEBI" id="CHEBI:33738"/>
        <dbReference type="ChEBI" id="CHEBI:61963"/>
        <dbReference type="ChEBI" id="CHEBI:65315"/>
        <dbReference type="ChEBI" id="CHEBI:136798"/>
        <dbReference type="ChEBI" id="CHEBI:456215"/>
        <dbReference type="EC" id="2.8.1.4"/>
    </reaction>
</comment>
<comment type="catalytic activity">
    <reaction evidence="1">
        <text>[ThiS sulfur-carrier protein]-C-terminal Gly-Gly-AMP + S-sulfanyl-L-cysteinyl-[cysteine desulfurase] + AH2 = [ThiS sulfur-carrier protein]-C-terminal-Gly-aminoethanethioate + L-cysteinyl-[cysteine desulfurase] + A + AMP + 2 H(+)</text>
        <dbReference type="Rhea" id="RHEA:43340"/>
        <dbReference type="Rhea" id="RHEA-COMP:12157"/>
        <dbReference type="Rhea" id="RHEA-COMP:12158"/>
        <dbReference type="Rhea" id="RHEA-COMP:12910"/>
        <dbReference type="Rhea" id="RHEA-COMP:19908"/>
        <dbReference type="ChEBI" id="CHEBI:13193"/>
        <dbReference type="ChEBI" id="CHEBI:15378"/>
        <dbReference type="ChEBI" id="CHEBI:17499"/>
        <dbReference type="ChEBI" id="CHEBI:29950"/>
        <dbReference type="ChEBI" id="CHEBI:61963"/>
        <dbReference type="ChEBI" id="CHEBI:90618"/>
        <dbReference type="ChEBI" id="CHEBI:232372"/>
        <dbReference type="ChEBI" id="CHEBI:456215"/>
    </reaction>
</comment>
<comment type="pathway">
    <text evidence="1">Cofactor biosynthesis; thiamine diphosphate biosynthesis.</text>
</comment>
<comment type="subcellular location">
    <subcellularLocation>
        <location evidence="1">Cytoplasm</location>
    </subcellularLocation>
</comment>
<comment type="similarity">
    <text evidence="1">Belongs to the ThiI family.</text>
</comment>
<protein>
    <recommendedName>
        <fullName evidence="1">tRNA sulfurtransferase</fullName>
        <ecNumber evidence="1">2.8.1.4</ecNumber>
    </recommendedName>
    <alternativeName>
        <fullName evidence="1">Sulfur carrier protein ThiS sulfurtransferase</fullName>
    </alternativeName>
    <alternativeName>
        <fullName evidence="1">Thiamine biosynthesis protein ThiI</fullName>
    </alternativeName>
    <alternativeName>
        <fullName evidence="1">tRNA 4-thiouridine synthase</fullName>
    </alternativeName>
</protein>
<feature type="chain" id="PRO_1000116400" description="tRNA sulfurtransferase">
    <location>
        <begin position="1"/>
        <end position="482"/>
    </location>
</feature>
<feature type="domain" description="THUMP" evidence="1">
    <location>
        <begin position="61"/>
        <end position="165"/>
    </location>
</feature>
<feature type="domain" description="Rhodanese" evidence="1">
    <location>
        <begin position="404"/>
        <end position="482"/>
    </location>
</feature>
<feature type="active site" description="Cysteine persulfide intermediate" evidence="1">
    <location>
        <position position="456"/>
    </location>
</feature>
<feature type="binding site" evidence="1">
    <location>
        <begin position="183"/>
        <end position="184"/>
    </location>
    <ligand>
        <name>ATP</name>
        <dbReference type="ChEBI" id="CHEBI:30616"/>
    </ligand>
</feature>
<feature type="binding site" evidence="1">
    <location>
        <position position="265"/>
    </location>
    <ligand>
        <name>ATP</name>
        <dbReference type="ChEBI" id="CHEBI:30616"/>
    </ligand>
</feature>
<feature type="binding site" evidence="1">
    <location>
        <position position="287"/>
    </location>
    <ligand>
        <name>ATP</name>
        <dbReference type="ChEBI" id="CHEBI:30616"/>
    </ligand>
</feature>
<feature type="binding site" evidence="1">
    <location>
        <position position="296"/>
    </location>
    <ligand>
        <name>ATP</name>
        <dbReference type="ChEBI" id="CHEBI:30616"/>
    </ligand>
</feature>
<feature type="disulfide bond" description="Redox-active" evidence="1">
    <location>
        <begin position="344"/>
        <end position="456"/>
    </location>
</feature>
<proteinExistence type="inferred from homology"/>
<accession>B7MD81</accession>